<comment type="function">
    <text evidence="1">Specifically methylates the guanosine in position 1516 of 16S rRNA.</text>
</comment>
<comment type="catalytic activity">
    <reaction evidence="1">
        <text>guanosine(1516) in 16S rRNA + S-adenosyl-L-methionine = N(2)-methylguanosine(1516) in 16S rRNA + S-adenosyl-L-homocysteine + H(+)</text>
        <dbReference type="Rhea" id="RHEA:43220"/>
        <dbReference type="Rhea" id="RHEA-COMP:10412"/>
        <dbReference type="Rhea" id="RHEA-COMP:10413"/>
        <dbReference type="ChEBI" id="CHEBI:15378"/>
        <dbReference type="ChEBI" id="CHEBI:57856"/>
        <dbReference type="ChEBI" id="CHEBI:59789"/>
        <dbReference type="ChEBI" id="CHEBI:74269"/>
        <dbReference type="ChEBI" id="CHEBI:74481"/>
        <dbReference type="EC" id="2.1.1.242"/>
    </reaction>
</comment>
<comment type="subcellular location">
    <subcellularLocation>
        <location evidence="1">Cytoplasm</location>
    </subcellularLocation>
</comment>
<comment type="similarity">
    <text evidence="1">Belongs to the methyltransferase superfamily. RsmJ family.</text>
</comment>
<name>RSMJ_NEIMA</name>
<protein>
    <recommendedName>
        <fullName evidence="1">Ribosomal RNA small subunit methyltransferase J</fullName>
        <ecNumber evidence="1">2.1.1.242</ecNumber>
    </recommendedName>
    <alternativeName>
        <fullName evidence="1">16S rRNA m2G1516 methyltransferase</fullName>
    </alternativeName>
    <alternativeName>
        <fullName evidence="1">rRNA (guanine-N(2)-)-methyltransferase</fullName>
    </alternativeName>
</protein>
<evidence type="ECO:0000255" key="1">
    <source>
        <dbReference type="HAMAP-Rule" id="MF_01523"/>
    </source>
</evidence>
<feature type="chain" id="PRO_0000212078" description="Ribosomal RNA small subunit methyltransferase J">
    <location>
        <begin position="1"/>
        <end position="250"/>
    </location>
</feature>
<feature type="binding site" evidence="1">
    <location>
        <begin position="96"/>
        <end position="97"/>
    </location>
    <ligand>
        <name>S-adenosyl-L-methionine</name>
        <dbReference type="ChEBI" id="CHEBI:59789"/>
    </ligand>
</feature>
<feature type="binding site" evidence="1">
    <location>
        <position position="168"/>
    </location>
    <ligand>
        <name>S-adenosyl-L-methionine</name>
        <dbReference type="ChEBI" id="CHEBI:59789"/>
    </ligand>
</feature>
<keyword id="KW-0963">Cytoplasm</keyword>
<keyword id="KW-0489">Methyltransferase</keyword>
<keyword id="KW-0698">rRNA processing</keyword>
<keyword id="KW-0949">S-adenosyl-L-methionine</keyword>
<keyword id="KW-0808">Transferase</keyword>
<gene>
    <name evidence="1" type="primary">rsmJ</name>
    <name type="ordered locus">NMA1806</name>
</gene>
<reference key="1">
    <citation type="journal article" date="2000" name="Nature">
        <title>Complete DNA sequence of a serogroup A strain of Neisseria meningitidis Z2491.</title>
        <authorList>
            <person name="Parkhill J."/>
            <person name="Achtman M."/>
            <person name="James K.D."/>
            <person name="Bentley S.D."/>
            <person name="Churcher C.M."/>
            <person name="Klee S.R."/>
            <person name="Morelli G."/>
            <person name="Basham D."/>
            <person name="Brown D."/>
            <person name="Chillingworth T."/>
            <person name="Davies R.M."/>
            <person name="Davis P."/>
            <person name="Devlin K."/>
            <person name="Feltwell T."/>
            <person name="Hamlin N."/>
            <person name="Holroyd S."/>
            <person name="Jagels K."/>
            <person name="Leather S."/>
            <person name="Moule S."/>
            <person name="Mungall K.L."/>
            <person name="Quail M.A."/>
            <person name="Rajandream M.A."/>
            <person name="Rutherford K.M."/>
            <person name="Simmonds M."/>
            <person name="Skelton J."/>
            <person name="Whitehead S."/>
            <person name="Spratt B.G."/>
            <person name="Barrell B.G."/>
        </authorList>
    </citation>
    <scope>NUCLEOTIDE SEQUENCE [LARGE SCALE GENOMIC DNA]</scope>
    <source>
        <strain>DSM 15465 / Z2491</strain>
    </source>
</reference>
<organism>
    <name type="scientific">Neisseria meningitidis serogroup A / serotype 4A (strain DSM 15465 / Z2491)</name>
    <dbReference type="NCBI Taxonomy" id="122587"/>
    <lineage>
        <taxon>Bacteria</taxon>
        <taxon>Pseudomonadati</taxon>
        <taxon>Pseudomonadota</taxon>
        <taxon>Betaproteobacteria</taxon>
        <taxon>Neisseriales</taxon>
        <taxon>Neisseriaceae</taxon>
        <taxon>Neisseria</taxon>
    </lineage>
</organism>
<dbReference type="EC" id="2.1.1.242" evidence="1"/>
<dbReference type="EMBL" id="AL157959">
    <property type="protein sequence ID" value="CAM08928.1"/>
    <property type="molecule type" value="Genomic_DNA"/>
</dbReference>
<dbReference type="PIR" id="C81806">
    <property type="entry name" value="C81806"/>
</dbReference>
<dbReference type="RefSeq" id="WP_002246323.1">
    <property type="nucleotide sequence ID" value="NC_003116.1"/>
</dbReference>
<dbReference type="SMR" id="Q9JTE9"/>
<dbReference type="EnsemblBacteria" id="CAM08928">
    <property type="protein sequence ID" value="CAM08928"/>
    <property type="gene ID" value="NMA1806"/>
</dbReference>
<dbReference type="KEGG" id="nma:NMA1806"/>
<dbReference type="HOGENOM" id="CLU_076324_1_0_4"/>
<dbReference type="Proteomes" id="UP000000626">
    <property type="component" value="Chromosome"/>
</dbReference>
<dbReference type="GO" id="GO:0005737">
    <property type="term" value="C:cytoplasm"/>
    <property type="evidence" value="ECO:0007669"/>
    <property type="project" value="UniProtKB-SubCell"/>
</dbReference>
<dbReference type="GO" id="GO:0008990">
    <property type="term" value="F:rRNA (guanine-N2-)-methyltransferase activity"/>
    <property type="evidence" value="ECO:0007669"/>
    <property type="project" value="UniProtKB-UniRule"/>
</dbReference>
<dbReference type="Gene3D" id="3.40.50.150">
    <property type="entry name" value="Vaccinia Virus protein VP39"/>
    <property type="match status" value="1"/>
</dbReference>
<dbReference type="Gene3D" id="3.40.1630.10">
    <property type="entry name" value="YhiQ-like domain"/>
    <property type="match status" value="1"/>
</dbReference>
<dbReference type="HAMAP" id="MF_01523">
    <property type="entry name" value="16SrRNA_methyltr_J"/>
    <property type="match status" value="1"/>
</dbReference>
<dbReference type="InterPro" id="IPR007536">
    <property type="entry name" value="16SrRNA_methylTrfase_J"/>
</dbReference>
<dbReference type="InterPro" id="IPR029063">
    <property type="entry name" value="SAM-dependent_MTases_sf"/>
</dbReference>
<dbReference type="PANTHER" id="PTHR36112">
    <property type="entry name" value="RIBOSOMAL RNA SMALL SUBUNIT METHYLTRANSFERASE J"/>
    <property type="match status" value="1"/>
</dbReference>
<dbReference type="PANTHER" id="PTHR36112:SF1">
    <property type="entry name" value="RIBOSOMAL RNA SMALL SUBUNIT METHYLTRANSFERASE J"/>
    <property type="match status" value="1"/>
</dbReference>
<dbReference type="Pfam" id="PF04445">
    <property type="entry name" value="SAM_MT"/>
    <property type="match status" value="1"/>
</dbReference>
<dbReference type="SUPFAM" id="SSF53335">
    <property type="entry name" value="S-adenosyl-L-methionine-dependent methyltransferases"/>
    <property type="match status" value="1"/>
</dbReference>
<proteinExistence type="inferred from homology"/>
<sequence>MTDILIDNTATETVRTLIRAFPLVPVSQPPEQGSYLLAEHDTVSLRLVGEKSSVIVDFASGAAQYRRTKGGGELIAKAVNHTAHPTVWDATAGLGRDSFVLASLGLAVTAFEQHPAVACLLSDGIRRALLNPETQDTAAHINLHFGNAAEQMPALVQTQGKPDIVYLDPMYPERRKSAAVKKEMTYFHRLVGEAQDEAALLHTARQTAKKRVVVKRPRLGEHLAGQAPAYQYTGKSTRFDVYLPYGTDKG</sequence>
<accession>Q9JTE9</accession>
<accession>A1IT16</accession>